<proteinExistence type="inferred from homology"/>
<feature type="chain" id="PRO_1000081599" description="Large ribosomal subunit protein bL35">
    <location>
        <begin position="1"/>
        <end position="66"/>
    </location>
</feature>
<keyword id="KW-0687">Ribonucleoprotein</keyword>
<keyword id="KW-0689">Ribosomal protein</keyword>
<protein>
    <recommendedName>
        <fullName evidence="1">Large ribosomal subunit protein bL35</fullName>
    </recommendedName>
    <alternativeName>
        <fullName evidence="2">50S ribosomal protein L35</fullName>
    </alternativeName>
</protein>
<name>RL35_CAUSK</name>
<comment type="similarity">
    <text evidence="1">Belongs to the bacterial ribosomal protein bL35 family.</text>
</comment>
<accession>B0SXZ9</accession>
<dbReference type="EMBL" id="CP000927">
    <property type="protein sequence ID" value="ABZ70322.1"/>
    <property type="molecule type" value="Genomic_DNA"/>
</dbReference>
<dbReference type="SMR" id="B0SXZ9"/>
<dbReference type="STRING" id="366602.Caul_1192"/>
<dbReference type="KEGG" id="cak:Caul_1192"/>
<dbReference type="eggNOG" id="COG0291">
    <property type="taxonomic scope" value="Bacteria"/>
</dbReference>
<dbReference type="HOGENOM" id="CLU_169643_2_1_5"/>
<dbReference type="OrthoDB" id="9804851at2"/>
<dbReference type="GO" id="GO:0022625">
    <property type="term" value="C:cytosolic large ribosomal subunit"/>
    <property type="evidence" value="ECO:0007669"/>
    <property type="project" value="TreeGrafter"/>
</dbReference>
<dbReference type="GO" id="GO:0003735">
    <property type="term" value="F:structural constituent of ribosome"/>
    <property type="evidence" value="ECO:0007669"/>
    <property type="project" value="InterPro"/>
</dbReference>
<dbReference type="GO" id="GO:0006412">
    <property type="term" value="P:translation"/>
    <property type="evidence" value="ECO:0007669"/>
    <property type="project" value="UniProtKB-UniRule"/>
</dbReference>
<dbReference type="FunFam" id="4.10.410.60:FF:000001">
    <property type="entry name" value="50S ribosomal protein L35"/>
    <property type="match status" value="1"/>
</dbReference>
<dbReference type="Gene3D" id="4.10.410.60">
    <property type="match status" value="1"/>
</dbReference>
<dbReference type="HAMAP" id="MF_00514">
    <property type="entry name" value="Ribosomal_bL35"/>
    <property type="match status" value="1"/>
</dbReference>
<dbReference type="InterPro" id="IPR001706">
    <property type="entry name" value="Ribosomal_bL35"/>
</dbReference>
<dbReference type="InterPro" id="IPR021137">
    <property type="entry name" value="Ribosomal_bL35-like"/>
</dbReference>
<dbReference type="InterPro" id="IPR018265">
    <property type="entry name" value="Ribosomal_bL35_CS"/>
</dbReference>
<dbReference type="InterPro" id="IPR037229">
    <property type="entry name" value="Ribosomal_bL35_sf"/>
</dbReference>
<dbReference type="NCBIfam" id="TIGR00001">
    <property type="entry name" value="rpmI_bact"/>
    <property type="match status" value="1"/>
</dbReference>
<dbReference type="PANTHER" id="PTHR33343">
    <property type="entry name" value="54S RIBOSOMAL PROTEIN BL35M"/>
    <property type="match status" value="1"/>
</dbReference>
<dbReference type="PANTHER" id="PTHR33343:SF1">
    <property type="entry name" value="LARGE RIBOSOMAL SUBUNIT PROTEIN BL35M"/>
    <property type="match status" value="1"/>
</dbReference>
<dbReference type="Pfam" id="PF01632">
    <property type="entry name" value="Ribosomal_L35p"/>
    <property type="match status" value="1"/>
</dbReference>
<dbReference type="SUPFAM" id="SSF143034">
    <property type="entry name" value="L35p-like"/>
    <property type="match status" value="1"/>
</dbReference>
<dbReference type="PROSITE" id="PS00936">
    <property type="entry name" value="RIBOSOMAL_L35"/>
    <property type="match status" value="1"/>
</dbReference>
<gene>
    <name evidence="1" type="primary">rpmI</name>
    <name type="ordered locus">Caul_1192</name>
</gene>
<organism>
    <name type="scientific">Caulobacter sp. (strain K31)</name>
    <dbReference type="NCBI Taxonomy" id="366602"/>
    <lineage>
        <taxon>Bacteria</taxon>
        <taxon>Pseudomonadati</taxon>
        <taxon>Pseudomonadota</taxon>
        <taxon>Alphaproteobacteria</taxon>
        <taxon>Caulobacterales</taxon>
        <taxon>Caulobacteraceae</taxon>
        <taxon>Caulobacter</taxon>
    </lineage>
</organism>
<reference key="1">
    <citation type="submission" date="2008-01" db="EMBL/GenBank/DDBJ databases">
        <title>Complete sequence of chromosome of Caulobacter sp. K31.</title>
        <authorList>
            <consortium name="US DOE Joint Genome Institute"/>
            <person name="Copeland A."/>
            <person name="Lucas S."/>
            <person name="Lapidus A."/>
            <person name="Barry K."/>
            <person name="Glavina del Rio T."/>
            <person name="Dalin E."/>
            <person name="Tice H."/>
            <person name="Pitluck S."/>
            <person name="Bruce D."/>
            <person name="Goodwin L."/>
            <person name="Thompson L.S."/>
            <person name="Brettin T."/>
            <person name="Detter J.C."/>
            <person name="Han C."/>
            <person name="Schmutz J."/>
            <person name="Larimer F."/>
            <person name="Land M."/>
            <person name="Hauser L."/>
            <person name="Kyrpides N."/>
            <person name="Kim E."/>
            <person name="Stephens C."/>
            <person name="Richardson P."/>
        </authorList>
    </citation>
    <scope>NUCLEOTIDE SEQUENCE [LARGE SCALE GENOMIC DNA]</scope>
    <source>
        <strain>K31</strain>
    </source>
</reference>
<sequence length="66" mass="7319">MPKLKTKSGAKKRFKITATGLLKAGVAGKRHRLIGHNGKYIRQNRGTKVMSASDTKTIRSYMPYGL</sequence>
<evidence type="ECO:0000255" key="1">
    <source>
        <dbReference type="HAMAP-Rule" id="MF_00514"/>
    </source>
</evidence>
<evidence type="ECO:0000305" key="2"/>